<gene>
    <name type="primary">ssb</name>
    <name type="ordered locus">bbp_488</name>
</gene>
<evidence type="ECO:0000255" key="1">
    <source>
        <dbReference type="HAMAP-Rule" id="MF_00984"/>
    </source>
</evidence>
<evidence type="ECO:0000256" key="2">
    <source>
        <dbReference type="SAM" id="MobiDB-lite"/>
    </source>
</evidence>
<accession>Q89A53</accession>
<organism>
    <name type="scientific">Buchnera aphidicola subsp. Baizongia pistaciae (strain Bp)</name>
    <dbReference type="NCBI Taxonomy" id="224915"/>
    <lineage>
        <taxon>Bacteria</taxon>
        <taxon>Pseudomonadati</taxon>
        <taxon>Pseudomonadota</taxon>
        <taxon>Gammaproteobacteria</taxon>
        <taxon>Enterobacterales</taxon>
        <taxon>Erwiniaceae</taxon>
        <taxon>Buchnera</taxon>
    </lineage>
</organism>
<comment type="function">
    <text evidence="1">Plays an important role in DNA replication, recombination and repair. Binds to ssDNA and to an array of partner proteins to recruit them to their sites of action during DNA metabolism.</text>
</comment>
<comment type="subunit">
    <text evidence="1">Homotetramer.</text>
</comment>
<feature type="chain" id="PRO_0000096019" description="Single-stranded DNA-binding protein">
    <location>
        <begin position="1"/>
        <end position="166"/>
    </location>
</feature>
<feature type="domain" description="SSB" evidence="1">
    <location>
        <begin position="6"/>
        <end position="111"/>
    </location>
</feature>
<feature type="region of interest" description="Disordered" evidence="2">
    <location>
        <begin position="143"/>
        <end position="166"/>
    </location>
</feature>
<feature type="short sequence motif" description="Important for interaction with partner proteins" evidence="1">
    <location>
        <begin position="161"/>
        <end position="166"/>
    </location>
</feature>
<proteinExistence type="inferred from homology"/>
<keyword id="KW-0227">DNA damage</keyword>
<keyword id="KW-0233">DNA recombination</keyword>
<keyword id="KW-0234">DNA repair</keyword>
<keyword id="KW-0235">DNA replication</keyword>
<keyword id="KW-0238">DNA-binding</keyword>
<keyword id="KW-1185">Reference proteome</keyword>
<name>SSB_BUCBP</name>
<reference key="1">
    <citation type="journal article" date="2003" name="Proc. Natl. Acad. Sci. U.S.A.">
        <title>Reductive genome evolution in Buchnera aphidicola.</title>
        <authorList>
            <person name="van Ham R.C.H.J."/>
            <person name="Kamerbeek J."/>
            <person name="Palacios C."/>
            <person name="Rausell C."/>
            <person name="Abascal F."/>
            <person name="Bastolla U."/>
            <person name="Fernandez J.M."/>
            <person name="Jimenez L."/>
            <person name="Postigo M."/>
            <person name="Silva F.J."/>
            <person name="Tamames J."/>
            <person name="Viguera E."/>
            <person name="Latorre A."/>
            <person name="Valencia A."/>
            <person name="Moran F."/>
            <person name="Moya A."/>
        </authorList>
    </citation>
    <scope>NUCLEOTIDE SEQUENCE [LARGE SCALE GENOMIC DNA]</scope>
    <source>
        <strain>Bp</strain>
    </source>
</reference>
<dbReference type="EMBL" id="AE016826">
    <property type="protein sequence ID" value="AAO27193.1"/>
    <property type="molecule type" value="Genomic_DNA"/>
</dbReference>
<dbReference type="RefSeq" id="WP_011091594.1">
    <property type="nucleotide sequence ID" value="NC_004545.1"/>
</dbReference>
<dbReference type="SMR" id="Q89A53"/>
<dbReference type="STRING" id="224915.bbp_488"/>
<dbReference type="KEGG" id="bab:bbp_488"/>
<dbReference type="eggNOG" id="COG0629">
    <property type="taxonomic scope" value="Bacteria"/>
</dbReference>
<dbReference type="HOGENOM" id="CLU_078758_0_2_6"/>
<dbReference type="OrthoDB" id="9809878at2"/>
<dbReference type="Proteomes" id="UP000000601">
    <property type="component" value="Chromosome"/>
</dbReference>
<dbReference type="GO" id="GO:0009295">
    <property type="term" value="C:nucleoid"/>
    <property type="evidence" value="ECO:0007669"/>
    <property type="project" value="TreeGrafter"/>
</dbReference>
<dbReference type="GO" id="GO:0003697">
    <property type="term" value="F:single-stranded DNA binding"/>
    <property type="evidence" value="ECO:0007669"/>
    <property type="project" value="UniProtKB-UniRule"/>
</dbReference>
<dbReference type="GO" id="GO:0006310">
    <property type="term" value="P:DNA recombination"/>
    <property type="evidence" value="ECO:0007669"/>
    <property type="project" value="UniProtKB-UniRule"/>
</dbReference>
<dbReference type="GO" id="GO:0006281">
    <property type="term" value="P:DNA repair"/>
    <property type="evidence" value="ECO:0007669"/>
    <property type="project" value="UniProtKB-UniRule"/>
</dbReference>
<dbReference type="GO" id="GO:0006260">
    <property type="term" value="P:DNA replication"/>
    <property type="evidence" value="ECO:0007669"/>
    <property type="project" value="UniProtKB-UniRule"/>
</dbReference>
<dbReference type="CDD" id="cd04496">
    <property type="entry name" value="SSB_OBF"/>
    <property type="match status" value="1"/>
</dbReference>
<dbReference type="Gene3D" id="2.40.50.140">
    <property type="entry name" value="Nucleic acid-binding proteins"/>
    <property type="match status" value="1"/>
</dbReference>
<dbReference type="HAMAP" id="MF_00984">
    <property type="entry name" value="SSB"/>
    <property type="match status" value="1"/>
</dbReference>
<dbReference type="InterPro" id="IPR012340">
    <property type="entry name" value="NA-bd_OB-fold"/>
</dbReference>
<dbReference type="InterPro" id="IPR000424">
    <property type="entry name" value="Primosome_PriB/ssb"/>
</dbReference>
<dbReference type="InterPro" id="IPR011344">
    <property type="entry name" value="ssDNA-bd"/>
</dbReference>
<dbReference type="NCBIfam" id="TIGR00621">
    <property type="entry name" value="ssb"/>
    <property type="match status" value="1"/>
</dbReference>
<dbReference type="PANTHER" id="PTHR10302">
    <property type="entry name" value="SINGLE-STRANDED DNA-BINDING PROTEIN"/>
    <property type="match status" value="1"/>
</dbReference>
<dbReference type="PANTHER" id="PTHR10302:SF27">
    <property type="entry name" value="SINGLE-STRANDED DNA-BINDING PROTEIN"/>
    <property type="match status" value="1"/>
</dbReference>
<dbReference type="Pfam" id="PF00436">
    <property type="entry name" value="SSB"/>
    <property type="match status" value="1"/>
</dbReference>
<dbReference type="PIRSF" id="PIRSF002070">
    <property type="entry name" value="SSB"/>
    <property type="match status" value="1"/>
</dbReference>
<dbReference type="SUPFAM" id="SSF50249">
    <property type="entry name" value="Nucleic acid-binding proteins"/>
    <property type="match status" value="1"/>
</dbReference>
<dbReference type="PROSITE" id="PS50935">
    <property type="entry name" value="SSB"/>
    <property type="match status" value="1"/>
</dbReference>
<sequence length="166" mass="18717">MASRGINKVILIGYLGQDPDVRYMQNGSAVTNITLATSETWKDKNNGEIKEKTEWHRIVFFNKLAEIAGEYLKKGSQVYIEGSLQTRKWKDQNGIERYITEIIVSVGGTMQMLGSRNSSSLTASSGLSKNNDNLSKQLLSEKKQESFNDSKLQNNNLDFDDEDIPF</sequence>
<protein>
    <recommendedName>
        <fullName evidence="1">Single-stranded DNA-binding protein</fullName>
        <shortName evidence="1">SSB</shortName>
    </recommendedName>
</protein>